<dbReference type="EMBL" id="CY020470">
    <property type="protein sequence ID" value="ABO38386.1"/>
    <property type="molecule type" value="Viral_cRNA"/>
</dbReference>
<dbReference type="SMR" id="A4GCM0"/>
<dbReference type="GlyCosmos" id="A4GCM0">
    <property type="glycosylation" value="1 site, No reported glycans"/>
</dbReference>
<dbReference type="Proteomes" id="UP000000829">
    <property type="component" value="Genome"/>
</dbReference>
<dbReference type="GO" id="GO:0020002">
    <property type="term" value="C:host cell plasma membrane"/>
    <property type="evidence" value="ECO:0007669"/>
    <property type="project" value="UniProtKB-SubCell"/>
</dbReference>
<dbReference type="GO" id="GO:0016020">
    <property type="term" value="C:membrane"/>
    <property type="evidence" value="ECO:0007669"/>
    <property type="project" value="UniProtKB-UniRule"/>
</dbReference>
<dbReference type="GO" id="GO:0055036">
    <property type="term" value="C:virion membrane"/>
    <property type="evidence" value="ECO:0007669"/>
    <property type="project" value="UniProtKB-SubCell"/>
</dbReference>
<dbReference type="GO" id="GO:0005216">
    <property type="term" value="F:monoatomic ion channel activity"/>
    <property type="evidence" value="ECO:0007669"/>
    <property type="project" value="UniProtKB-UniRule"/>
</dbReference>
<dbReference type="GO" id="GO:0015078">
    <property type="term" value="F:proton transmembrane transporter activity"/>
    <property type="evidence" value="ECO:0007669"/>
    <property type="project" value="UniProtKB-UniRule"/>
</dbReference>
<dbReference type="GO" id="GO:0051259">
    <property type="term" value="P:protein complex oligomerization"/>
    <property type="evidence" value="ECO:0007669"/>
    <property type="project" value="UniProtKB-UniRule"/>
</dbReference>
<dbReference type="GO" id="GO:0044694">
    <property type="term" value="P:symbiont genome entry into host cell via pore formation in plasma membrane"/>
    <property type="evidence" value="ECO:0007669"/>
    <property type="project" value="UniProtKB-UniRule"/>
</dbReference>
<dbReference type="GO" id="GO:0140321">
    <property type="term" value="P:symbiont-mediated suppression of host autophagy"/>
    <property type="evidence" value="ECO:0007669"/>
    <property type="project" value="UniProtKB-KW"/>
</dbReference>
<dbReference type="Gene3D" id="6.10.250.1640">
    <property type="match status" value="1"/>
</dbReference>
<dbReference type="HAMAP" id="MF_04069">
    <property type="entry name" value="INFV_M2"/>
    <property type="match status" value="1"/>
</dbReference>
<dbReference type="InterPro" id="IPR002089">
    <property type="entry name" value="Flu_M2"/>
</dbReference>
<dbReference type="Pfam" id="PF00599">
    <property type="entry name" value="Flu_M2"/>
    <property type="match status" value="1"/>
</dbReference>
<gene>
    <name evidence="1" type="primary">M</name>
    <name type="synonym">M2</name>
</gene>
<sequence>MSLLTEVETPIRNEWGCRCNGSSDPLVIAASIIGILHLILWILDRLLFKCIYRRFKYGLKRGPSTEGVPESMREEYRKEQQSAVDADDGHFVNIEPE</sequence>
<reference key="1">
    <citation type="submission" date="2007-03" db="EMBL/GenBank/DDBJ databases">
        <title>The NIAID influenza genome sequencing project.</title>
        <authorList>
            <person name="Ghedin E."/>
            <person name="Spiro D."/>
            <person name="Miller N."/>
            <person name="Zaborsky J."/>
            <person name="Feldblyum T."/>
            <person name="Subbu V."/>
            <person name="Shumway M."/>
            <person name="Sparenborg J."/>
            <person name="Groveman L."/>
            <person name="Halpin R."/>
            <person name="Sitz J."/>
            <person name="Koo H."/>
            <person name="Salzberg S.L."/>
            <person name="Webster R.G."/>
            <person name="Hoffmann E."/>
            <person name="Krauss S."/>
            <person name="Naeve C."/>
            <person name="Bao Y."/>
            <person name="Bolotov P."/>
            <person name="Dernovoy D."/>
            <person name="Kiryutin B."/>
            <person name="Lipman D.J."/>
            <person name="Tatusova T."/>
        </authorList>
    </citation>
    <scope>NUCLEOTIDE SEQUENCE [GENOMIC RNA]</scope>
</reference>
<reference key="2">
    <citation type="submission" date="2007-03" db="EMBL/GenBank/DDBJ databases">
        <authorList>
            <consortium name="The NIAID Influenza Genome Sequencing Consortium"/>
        </authorList>
    </citation>
    <scope>NUCLEOTIDE SEQUENCE [GENOMIC RNA]</scope>
</reference>
<proteinExistence type="inferred from homology"/>
<protein>
    <recommendedName>
        <fullName evidence="1">Matrix protein 2</fullName>
    </recommendedName>
    <alternativeName>
        <fullName evidence="1">Proton channel protein M2</fullName>
    </alternativeName>
</protein>
<accession>A4GCM0</accession>
<comment type="function">
    <text evidence="1">Forms a proton-selective ion channel that is necessary for the efficient release of the viral genome during virus entry. After attaching to the cell surface, the virion enters the cell by endocytosis. Acidification of the endosome triggers M2 ion channel activity. The influx of protons into virion interior is believed to disrupt interactions between the viral ribonucleoprotein (RNP), matrix protein 1 (M1), and lipid bilayers, thereby freeing the viral genome from interaction with viral proteins and enabling RNA segments to migrate to the host cell nucleus, where influenza virus RNA transcription and replication occur. Also plays a role in viral proteins secretory pathway. Elevates the intravesicular pH of normally acidic compartments, such as trans-Golgi network, preventing newly formed hemagglutinin from premature switching to the fusion-active conformation.</text>
</comment>
<comment type="activity regulation">
    <text>The M2 protein from most influenza A strains is inhibited by amantadine and rimantadine, resulting in viral uncoating incapacity. Emergence of amantadine-resistant variants is usually rapid.</text>
</comment>
<comment type="subunit">
    <text evidence="1">Homotetramer; composed of two disulfide-linked dimers held together by non-covalent interactions. May interact with matrix protein 1.</text>
</comment>
<comment type="subcellular location">
    <subcellularLocation>
        <location evidence="1">Virion membrane</location>
    </subcellularLocation>
    <subcellularLocation>
        <location evidence="1">Host apical cell membrane</location>
        <topology evidence="1">Single-pass type III membrane protein</topology>
    </subcellularLocation>
    <text evidence="1">Abundantly expressed at the apical plasma membrane in infected polarized epithelial cells, in close proximity to budding and assembled virions. Minor component of virions (only 16-20 molecules/virion).</text>
</comment>
<comment type="alternative products">
    <event type="alternative splicing"/>
    <isoform>
        <id>A4GCM0-1</id>
        <name>M2</name>
        <sequence type="displayed"/>
    </isoform>
    <isoform>
        <id>A4GCM1-1</id>
        <name>M1</name>
        <sequence type="external"/>
    </isoform>
    <text>Only the first 9 residues are shared by the 2 isoforms.</text>
</comment>
<comment type="domain">
    <text evidence="1">Cytoplasmic tail plays an important role in virion assembly and morphogenesis.</text>
</comment>
<comment type="miscellaneous">
    <text evidence="1">When the channel is activated, one or more imidazole moieties of His-37 probably become bi-protonated.</text>
</comment>
<comment type="similarity">
    <text evidence="1">Belongs to the influenza viruses matrix protein M2 family.</text>
</comment>
<organism>
    <name type="scientific">Influenza A virus (strain A/USA:Phila/1935 H1N1)</name>
    <dbReference type="NCBI Taxonomy" id="425570"/>
    <lineage>
        <taxon>Viruses</taxon>
        <taxon>Riboviria</taxon>
        <taxon>Orthornavirae</taxon>
        <taxon>Negarnaviricota</taxon>
        <taxon>Polyploviricotina</taxon>
        <taxon>Insthoviricetes</taxon>
        <taxon>Articulavirales</taxon>
        <taxon>Orthomyxoviridae</taxon>
        <taxon>Alphainfluenzavirus</taxon>
        <taxon>Alphainfluenzavirus influenzae</taxon>
        <taxon>Influenza A virus</taxon>
    </lineage>
</organism>
<name>M2_I35A3</name>
<organismHost>
    <name type="scientific">Aves</name>
    <dbReference type="NCBI Taxonomy" id="8782"/>
</organismHost>
<organismHost>
    <name type="scientific">Homo sapiens</name>
    <name type="common">Human</name>
    <dbReference type="NCBI Taxonomy" id="9606"/>
</organismHost>
<organismHost>
    <name type="scientific">Sus scrofa</name>
    <name type="common">Pig</name>
    <dbReference type="NCBI Taxonomy" id="9823"/>
</organismHost>
<evidence type="ECO:0000255" key="1">
    <source>
        <dbReference type="HAMAP-Rule" id="MF_04069"/>
    </source>
</evidence>
<evidence type="ECO:0000256" key="2">
    <source>
        <dbReference type="SAM" id="MobiDB-lite"/>
    </source>
</evidence>
<feature type="chain" id="PRO_0000372918" description="Matrix protein 2">
    <location>
        <begin position="1"/>
        <end position="97"/>
    </location>
</feature>
<feature type="topological domain" description="Virion surface" evidence="1">
    <location>
        <begin position="1"/>
        <end position="22"/>
    </location>
</feature>
<feature type="transmembrane region" description="Helical; Signal-anchor for type III membrane protein" evidence="1">
    <location>
        <begin position="23"/>
        <end position="43"/>
    </location>
</feature>
<feature type="topological domain" description="Intravirion" evidence="1">
    <location>
        <begin position="44"/>
        <end position="97"/>
    </location>
</feature>
<feature type="region of interest" description="Disordered" evidence="2">
    <location>
        <begin position="60"/>
        <end position="85"/>
    </location>
</feature>
<feature type="compositionally biased region" description="Basic and acidic residues" evidence="2">
    <location>
        <begin position="71"/>
        <end position="80"/>
    </location>
</feature>
<feature type="site" description="Essential for channel activity, possibly by being protonated during channel activation, and by forming the channel gate and the selective filter" evidence="1">
    <location>
        <position position="37"/>
    </location>
</feature>
<feature type="site" description="Seems to be involved in pH gating" evidence="1">
    <location>
        <position position="41"/>
    </location>
</feature>
<feature type="modified residue" description="Phosphoserine; by host" evidence="1">
    <location>
        <position position="64"/>
    </location>
</feature>
<feature type="modified residue" description="Phosphoserine; by host" evidence="1">
    <location>
        <position position="82"/>
    </location>
</feature>
<feature type="lipid moiety-binding region" description="S-palmitoyl cysteine; by host" evidence="1">
    <location>
        <position position="50"/>
    </location>
</feature>
<feature type="glycosylation site" description="N-linked (GlcNAc...) asparagine; by host" evidence="1">
    <location>
        <position position="20"/>
    </location>
</feature>
<feature type="disulfide bond" description="Interchain (with C-17)" evidence="1">
    <location>
        <position position="17"/>
    </location>
</feature>
<feature type="disulfide bond" description="Interchain (with C-19)" evidence="1">
    <location>
        <position position="19"/>
    </location>
</feature>
<keyword id="KW-0025">Alternative splicing</keyword>
<keyword id="KW-1015">Disulfide bond</keyword>
<keyword id="KW-0325">Glycoprotein</keyword>
<keyword id="KW-1032">Host cell membrane</keyword>
<keyword id="KW-1043">Host membrane</keyword>
<keyword id="KW-0945">Host-virus interaction</keyword>
<keyword id="KW-0375">Hydrogen ion transport</keyword>
<keyword id="KW-1083">Inhibition of host autophagy by virus</keyword>
<keyword id="KW-0407">Ion channel</keyword>
<keyword id="KW-0406">Ion transport</keyword>
<keyword id="KW-0449">Lipoprotein</keyword>
<keyword id="KW-0472">Membrane</keyword>
<keyword id="KW-0564">Palmitate</keyword>
<keyword id="KW-0597">Phosphoprotein</keyword>
<keyword id="KW-0735">Signal-anchor</keyword>
<keyword id="KW-0812">Transmembrane</keyword>
<keyword id="KW-1133">Transmembrane helix</keyword>
<keyword id="KW-0813">Transport</keyword>
<keyword id="KW-1182">Viral ion channel</keyword>
<keyword id="KW-0946">Virion</keyword>